<gene>
    <name evidence="1" type="primary">metE</name>
    <name type="ordered locus">SeHA_C4291</name>
</gene>
<keyword id="KW-0028">Amino-acid biosynthesis</keyword>
<keyword id="KW-0479">Metal-binding</keyword>
<keyword id="KW-0486">Methionine biosynthesis</keyword>
<keyword id="KW-0489">Methyltransferase</keyword>
<keyword id="KW-0677">Repeat</keyword>
<keyword id="KW-0808">Transferase</keyword>
<keyword id="KW-0862">Zinc</keyword>
<evidence type="ECO:0000255" key="1">
    <source>
        <dbReference type="HAMAP-Rule" id="MF_00172"/>
    </source>
</evidence>
<proteinExistence type="inferred from homology"/>
<name>METE_SALHS</name>
<feature type="chain" id="PRO_1000097841" description="5-methyltetrahydropteroyltriglutamate--homocysteine methyltransferase">
    <location>
        <begin position="1"/>
        <end position="754"/>
    </location>
</feature>
<feature type="active site" description="Proton donor" evidence="1">
    <location>
        <position position="694"/>
    </location>
</feature>
<feature type="binding site" evidence="1">
    <location>
        <begin position="17"/>
        <end position="20"/>
    </location>
    <ligand>
        <name>5-methyltetrahydropteroyltri-L-glutamate</name>
        <dbReference type="ChEBI" id="CHEBI:58207"/>
    </ligand>
</feature>
<feature type="binding site" evidence="1">
    <location>
        <position position="117"/>
    </location>
    <ligand>
        <name>5-methyltetrahydropteroyltri-L-glutamate</name>
        <dbReference type="ChEBI" id="CHEBI:58207"/>
    </ligand>
</feature>
<feature type="binding site" evidence="1">
    <location>
        <begin position="431"/>
        <end position="433"/>
    </location>
    <ligand>
        <name>L-homocysteine</name>
        <dbReference type="ChEBI" id="CHEBI:58199"/>
    </ligand>
</feature>
<feature type="binding site" evidence="1">
    <location>
        <begin position="431"/>
        <end position="433"/>
    </location>
    <ligand>
        <name>L-methionine</name>
        <dbReference type="ChEBI" id="CHEBI:57844"/>
    </ligand>
</feature>
<feature type="binding site" evidence="1">
    <location>
        <position position="484"/>
    </location>
    <ligand>
        <name>L-homocysteine</name>
        <dbReference type="ChEBI" id="CHEBI:58199"/>
    </ligand>
</feature>
<feature type="binding site" evidence="1">
    <location>
        <position position="484"/>
    </location>
    <ligand>
        <name>L-methionine</name>
        <dbReference type="ChEBI" id="CHEBI:57844"/>
    </ligand>
</feature>
<feature type="binding site" evidence="1">
    <location>
        <begin position="515"/>
        <end position="516"/>
    </location>
    <ligand>
        <name>5-methyltetrahydropteroyltri-L-glutamate</name>
        <dbReference type="ChEBI" id="CHEBI:58207"/>
    </ligand>
</feature>
<feature type="binding site" evidence="1">
    <location>
        <position position="561"/>
    </location>
    <ligand>
        <name>5-methyltetrahydropteroyltri-L-glutamate</name>
        <dbReference type="ChEBI" id="CHEBI:58207"/>
    </ligand>
</feature>
<feature type="binding site" evidence="1">
    <location>
        <position position="599"/>
    </location>
    <ligand>
        <name>L-homocysteine</name>
        <dbReference type="ChEBI" id="CHEBI:58199"/>
    </ligand>
</feature>
<feature type="binding site" evidence="1">
    <location>
        <position position="599"/>
    </location>
    <ligand>
        <name>L-methionine</name>
        <dbReference type="ChEBI" id="CHEBI:57844"/>
    </ligand>
</feature>
<feature type="binding site" evidence="1">
    <location>
        <position position="605"/>
    </location>
    <ligand>
        <name>5-methyltetrahydropteroyltri-L-glutamate</name>
        <dbReference type="ChEBI" id="CHEBI:58207"/>
    </ligand>
</feature>
<feature type="binding site" evidence="1">
    <location>
        <position position="641"/>
    </location>
    <ligand>
        <name>Zn(2+)</name>
        <dbReference type="ChEBI" id="CHEBI:29105"/>
        <note>catalytic</note>
    </ligand>
</feature>
<feature type="binding site" evidence="1">
    <location>
        <position position="643"/>
    </location>
    <ligand>
        <name>Zn(2+)</name>
        <dbReference type="ChEBI" id="CHEBI:29105"/>
        <note>catalytic</note>
    </ligand>
</feature>
<feature type="binding site" evidence="1">
    <location>
        <position position="665"/>
    </location>
    <ligand>
        <name>Zn(2+)</name>
        <dbReference type="ChEBI" id="CHEBI:29105"/>
        <note>catalytic</note>
    </ligand>
</feature>
<feature type="binding site" evidence="1">
    <location>
        <position position="726"/>
    </location>
    <ligand>
        <name>Zn(2+)</name>
        <dbReference type="ChEBI" id="CHEBI:29105"/>
        <note>catalytic</note>
    </ligand>
</feature>
<reference key="1">
    <citation type="journal article" date="2011" name="J. Bacteriol.">
        <title>Comparative genomics of 28 Salmonella enterica isolates: evidence for CRISPR-mediated adaptive sublineage evolution.</title>
        <authorList>
            <person name="Fricke W.F."/>
            <person name="Mammel M.K."/>
            <person name="McDermott P.F."/>
            <person name="Tartera C."/>
            <person name="White D.G."/>
            <person name="Leclerc J.E."/>
            <person name="Ravel J."/>
            <person name="Cebula T.A."/>
        </authorList>
    </citation>
    <scope>NUCLEOTIDE SEQUENCE [LARGE SCALE GENOMIC DNA]</scope>
    <source>
        <strain>SL476</strain>
    </source>
</reference>
<sequence>MTILTHTLGFPRVGLRRELKKAQESYWAGNTTREALLAVGRELRARHWEQQKQAGIDLLPVGDFAWYDHVLTTSLLLGNVPARHQNNDGSVDIDTLFRIGRGRAPTGEPAAAAEMTKWFNTNYHYIVPEFSKGQQFRLTWTQLLEEVDEALALGHKIKPVLLGPVTYLWLGKVKGEPFDRLTLLKDILPVYQHVLAELAKRGIEWVQIDEPALVLELPQAWLDAFKPAYDALAGQVKLLLTTYFEGVTPNLDTIIALPVQGLHVDLIHGKDDVAELHQRLPVDWLLSAGLINGRNVWRADLTEKYAQINAIVGKRALWVASSCSLLHSPIDLSVETRLDTEVKSWFAFALQKCGELALLRDALNSGETAALEEWSAPIQARRHSRRVHNAAVEKRLAAITAQDSQRENPYEVRAEAQRARFKLPAWPTTTIGSFPQTTEIRGLRLDFKKGNLDANHYRTGIAEHIKQAIIEQERLGLDVLVHGEAERNDMVEYFGEHLDGFVFTQNGWVQSYGSRCVKPPVVIGDISRPAPITVEWAKYAQSLTDKPVKGMLTGPVTILCWSFPREDVTRETIAKQIALALRDEVADLEAAGIGIIQIDEPALREGLPLRRSDWDAYLEWGVEAFRINAAVAKDETQIHTHMCYCEFNDIMDSIAALDADVITIETSRSDMELLESFEAFDYPNEIGPGVYDIHSPNVPSVEWIEALLKKAAQRIPAQRLWVNPDCGLKTRGWPETRAALANMVKAAHNLRQAK</sequence>
<organism>
    <name type="scientific">Salmonella heidelberg (strain SL476)</name>
    <dbReference type="NCBI Taxonomy" id="454169"/>
    <lineage>
        <taxon>Bacteria</taxon>
        <taxon>Pseudomonadati</taxon>
        <taxon>Pseudomonadota</taxon>
        <taxon>Gammaproteobacteria</taxon>
        <taxon>Enterobacterales</taxon>
        <taxon>Enterobacteriaceae</taxon>
        <taxon>Salmonella</taxon>
    </lineage>
</organism>
<dbReference type="EC" id="2.1.1.14" evidence="1"/>
<dbReference type="EMBL" id="CP001120">
    <property type="protein sequence ID" value="ACF67698.1"/>
    <property type="molecule type" value="Genomic_DNA"/>
</dbReference>
<dbReference type="RefSeq" id="WP_000154192.1">
    <property type="nucleotide sequence ID" value="NC_011083.1"/>
</dbReference>
<dbReference type="SMR" id="B4TBQ7"/>
<dbReference type="KEGG" id="seh:SeHA_C4291"/>
<dbReference type="HOGENOM" id="CLU_013175_0_0_6"/>
<dbReference type="UniPathway" id="UPA00051">
    <property type="reaction ID" value="UER00082"/>
</dbReference>
<dbReference type="Proteomes" id="UP000001866">
    <property type="component" value="Chromosome"/>
</dbReference>
<dbReference type="GO" id="GO:0003871">
    <property type="term" value="F:5-methyltetrahydropteroyltriglutamate-homocysteine S-methyltransferase activity"/>
    <property type="evidence" value="ECO:0007669"/>
    <property type="project" value="UniProtKB-UniRule"/>
</dbReference>
<dbReference type="GO" id="GO:0008270">
    <property type="term" value="F:zinc ion binding"/>
    <property type="evidence" value="ECO:0007669"/>
    <property type="project" value="InterPro"/>
</dbReference>
<dbReference type="GO" id="GO:0009086">
    <property type="term" value="P:methionine biosynthetic process"/>
    <property type="evidence" value="ECO:0007669"/>
    <property type="project" value="UniProtKB-UniRule"/>
</dbReference>
<dbReference type="GO" id="GO:0032259">
    <property type="term" value="P:methylation"/>
    <property type="evidence" value="ECO:0007669"/>
    <property type="project" value="UniProtKB-KW"/>
</dbReference>
<dbReference type="CDD" id="cd03311">
    <property type="entry name" value="CIMS_C_terminal_like"/>
    <property type="match status" value="1"/>
</dbReference>
<dbReference type="CDD" id="cd03312">
    <property type="entry name" value="CIMS_N_terminal_like"/>
    <property type="match status" value="1"/>
</dbReference>
<dbReference type="FunFam" id="3.20.20.210:FF:000002">
    <property type="entry name" value="5-methyltetrahydropteroyltriglutamate--homocysteine methyltransferase"/>
    <property type="match status" value="1"/>
</dbReference>
<dbReference type="FunFam" id="3.20.20.210:FF:000003">
    <property type="entry name" value="5-methyltetrahydropteroyltriglutamate--homocysteine methyltransferase"/>
    <property type="match status" value="1"/>
</dbReference>
<dbReference type="Gene3D" id="3.20.20.210">
    <property type="match status" value="2"/>
</dbReference>
<dbReference type="HAMAP" id="MF_00172">
    <property type="entry name" value="Meth_synth"/>
    <property type="match status" value="1"/>
</dbReference>
<dbReference type="InterPro" id="IPR013215">
    <property type="entry name" value="Cbl-indep_Met_Synth_N"/>
</dbReference>
<dbReference type="InterPro" id="IPR006276">
    <property type="entry name" value="Cobalamin-indep_Met_synthase"/>
</dbReference>
<dbReference type="InterPro" id="IPR002629">
    <property type="entry name" value="Met_Synth_C/arc"/>
</dbReference>
<dbReference type="InterPro" id="IPR038071">
    <property type="entry name" value="UROD/MetE-like_sf"/>
</dbReference>
<dbReference type="NCBIfam" id="TIGR01371">
    <property type="entry name" value="met_syn_B12ind"/>
    <property type="match status" value="1"/>
</dbReference>
<dbReference type="NCBIfam" id="NF003556">
    <property type="entry name" value="PRK05222.1"/>
    <property type="match status" value="1"/>
</dbReference>
<dbReference type="PANTHER" id="PTHR30519">
    <property type="entry name" value="5-METHYLTETRAHYDROPTEROYLTRIGLUTAMATE--HOMOCYSTEINE METHYLTRANSFERASE"/>
    <property type="match status" value="1"/>
</dbReference>
<dbReference type="Pfam" id="PF08267">
    <property type="entry name" value="Meth_synt_1"/>
    <property type="match status" value="1"/>
</dbReference>
<dbReference type="Pfam" id="PF01717">
    <property type="entry name" value="Meth_synt_2"/>
    <property type="match status" value="1"/>
</dbReference>
<dbReference type="PIRSF" id="PIRSF000382">
    <property type="entry name" value="MeTrfase_B12_ind"/>
    <property type="match status" value="1"/>
</dbReference>
<dbReference type="SUPFAM" id="SSF51726">
    <property type="entry name" value="UROD/MetE-like"/>
    <property type="match status" value="2"/>
</dbReference>
<comment type="function">
    <text evidence="1">Catalyzes the transfer of a methyl group from 5-methyltetrahydrofolate to homocysteine resulting in methionine formation.</text>
</comment>
<comment type="catalytic activity">
    <reaction evidence="1">
        <text>5-methyltetrahydropteroyltri-L-glutamate + L-homocysteine = tetrahydropteroyltri-L-glutamate + L-methionine</text>
        <dbReference type="Rhea" id="RHEA:21196"/>
        <dbReference type="ChEBI" id="CHEBI:57844"/>
        <dbReference type="ChEBI" id="CHEBI:58140"/>
        <dbReference type="ChEBI" id="CHEBI:58199"/>
        <dbReference type="ChEBI" id="CHEBI:58207"/>
        <dbReference type="EC" id="2.1.1.14"/>
    </reaction>
</comment>
<comment type="cofactor">
    <cofactor evidence="1">
        <name>Zn(2+)</name>
        <dbReference type="ChEBI" id="CHEBI:29105"/>
    </cofactor>
    <text evidence="1">Binds 1 zinc ion per subunit.</text>
</comment>
<comment type="pathway">
    <text evidence="1">Amino-acid biosynthesis; L-methionine biosynthesis via de novo pathway; L-methionine from L-homocysteine (MetE route): step 1/1.</text>
</comment>
<comment type="similarity">
    <text evidence="1">Belongs to the vitamin-B12 independent methionine synthase family.</text>
</comment>
<accession>B4TBQ7</accession>
<protein>
    <recommendedName>
        <fullName evidence="1">5-methyltetrahydropteroyltriglutamate--homocysteine methyltransferase</fullName>
        <ecNumber evidence="1">2.1.1.14</ecNumber>
    </recommendedName>
    <alternativeName>
        <fullName evidence="1">Cobalamin-independent methionine synthase</fullName>
    </alternativeName>
    <alternativeName>
        <fullName evidence="1">Methionine synthase, vitamin-B12 independent isozyme</fullName>
    </alternativeName>
</protein>